<name>DPOD2_ARATH</name>
<feature type="chain" id="PRO_0000096171" description="DNA polymerase delta small subunit">
    <location>
        <begin position="1"/>
        <end position="440"/>
    </location>
</feature>
<proteinExistence type="evidence at transcript level"/>
<sequence length="440" mass="49410">MEIDSEKIHERKQSDYNSLDERFEIQKEMYRGQQYSQIYFARLHLMRTLLYSLAPTWKSHLPVCKVLGLEKGKECIIVGTLFKHMKLKPCVLDEYSKERSVTPLVKPHNFMHPDDNLILEDESGRVKLAGSALSPAIYVTGVVVALHGKETNAGEFFVEDVLEAGLPPQIERPIDLQEDKYVVLLSGLCIGSKSANPLQFQLLVDHITGHLGDEEEQGLAAQIVHVVIAGNSFEFPRKLINGQNLASKDQSTLYEPIKELDIMLSQIAAGVSVDIMPGTNDPANFALPQQPLNRCLFPGSSPYNTFRSCTNPHSFDVDNIRFLGTSGQNIDDLGKYSEAKSKLDFVERTLRWRHLAPTAPNTLGCYPFTDRDPFLIETCPHVYFVGNQDKYDNRLIKGSEGQLVRLICIPKFCETGIAVAVNLRNLECHTLSFSTQINQS</sequence>
<dbReference type="EC" id="2.7.7.7"/>
<dbReference type="EMBL" id="AC002561">
    <property type="protein sequence ID" value="AAB88640.1"/>
    <property type="status" value="ALT_SEQ"/>
    <property type="molecule type" value="Genomic_DNA"/>
</dbReference>
<dbReference type="EMBL" id="CP002685">
    <property type="protein sequence ID" value="AEC10072.1"/>
    <property type="molecule type" value="Genomic_DNA"/>
</dbReference>
<dbReference type="EMBL" id="AY136418">
    <property type="protein sequence ID" value="AAM97084.1"/>
    <property type="molecule type" value="mRNA"/>
</dbReference>
<dbReference type="EMBL" id="BT008753">
    <property type="protein sequence ID" value="AAP49515.1"/>
    <property type="molecule type" value="mRNA"/>
</dbReference>
<dbReference type="EMBL" id="AK221655">
    <property type="protein sequence ID" value="BAD95325.1"/>
    <property type="molecule type" value="mRNA"/>
</dbReference>
<dbReference type="PIR" id="T00922">
    <property type="entry name" value="T00922"/>
</dbReference>
<dbReference type="RefSeq" id="NP_973664.1">
    <molecule id="O48520-1"/>
    <property type="nucleotide sequence ID" value="NM_201935.3"/>
</dbReference>
<dbReference type="SMR" id="O48520"/>
<dbReference type="BioGRID" id="4149">
    <property type="interactions" value="2"/>
</dbReference>
<dbReference type="FunCoup" id="O48520">
    <property type="interactions" value="3483"/>
</dbReference>
<dbReference type="IntAct" id="O48520">
    <property type="interactions" value="1"/>
</dbReference>
<dbReference type="STRING" id="3702.O48520"/>
<dbReference type="PaxDb" id="3702-AT2G42120.1"/>
<dbReference type="ProteomicsDB" id="241251">
    <molecule id="O48520-1"/>
</dbReference>
<dbReference type="EnsemblPlants" id="AT2G42120.2">
    <molecule id="O48520-1"/>
    <property type="protein sequence ID" value="AT2G42120.2"/>
    <property type="gene ID" value="AT2G42120"/>
</dbReference>
<dbReference type="GeneID" id="818812"/>
<dbReference type="Gramene" id="AT2G42120.2">
    <molecule id="O48520-1"/>
    <property type="protein sequence ID" value="AT2G42120.2"/>
    <property type="gene ID" value="AT2G42120"/>
</dbReference>
<dbReference type="KEGG" id="ath:AT2G42120"/>
<dbReference type="Araport" id="AT2G42120"/>
<dbReference type="TAIR" id="AT2G42120">
    <property type="gene designation" value="POLD2"/>
</dbReference>
<dbReference type="eggNOG" id="KOG2732">
    <property type="taxonomic scope" value="Eukaryota"/>
</dbReference>
<dbReference type="HOGENOM" id="CLU_021763_0_0_1"/>
<dbReference type="InParanoid" id="O48520"/>
<dbReference type="OMA" id="HCILIGT"/>
<dbReference type="PhylomeDB" id="O48520"/>
<dbReference type="PRO" id="PR:O48520"/>
<dbReference type="Proteomes" id="UP000006548">
    <property type="component" value="Chromosome 2"/>
</dbReference>
<dbReference type="ExpressionAtlas" id="O48520">
    <property type="expression patterns" value="baseline and differential"/>
</dbReference>
<dbReference type="GO" id="GO:0043625">
    <property type="term" value="C:delta DNA polymerase complex"/>
    <property type="evidence" value="ECO:0007669"/>
    <property type="project" value="UniProtKB-ARBA"/>
</dbReference>
<dbReference type="GO" id="GO:0003677">
    <property type="term" value="F:DNA binding"/>
    <property type="evidence" value="ECO:0007669"/>
    <property type="project" value="InterPro"/>
</dbReference>
<dbReference type="GO" id="GO:0003887">
    <property type="term" value="F:DNA-directed DNA polymerase activity"/>
    <property type="evidence" value="ECO:0007669"/>
    <property type="project" value="UniProtKB-KW"/>
</dbReference>
<dbReference type="GO" id="GO:0006260">
    <property type="term" value="P:DNA replication"/>
    <property type="evidence" value="ECO:0007669"/>
    <property type="project" value="UniProtKB-KW"/>
</dbReference>
<dbReference type="CDD" id="cd07387">
    <property type="entry name" value="MPP_PolD2_C"/>
    <property type="match status" value="1"/>
</dbReference>
<dbReference type="FunFam" id="3.60.21.50:FF:000002">
    <property type="entry name" value="DNA polymerase delta small subunit"/>
    <property type="match status" value="1"/>
</dbReference>
<dbReference type="FunFam" id="2.40.50.430:FF:000001">
    <property type="entry name" value="DNA polymerase delta subunit 2"/>
    <property type="match status" value="1"/>
</dbReference>
<dbReference type="Gene3D" id="2.40.50.430">
    <property type="match status" value="1"/>
</dbReference>
<dbReference type="Gene3D" id="3.60.21.50">
    <property type="match status" value="1"/>
</dbReference>
<dbReference type="InterPro" id="IPR007185">
    <property type="entry name" value="DNA_pol_a/d/e_bsu"/>
</dbReference>
<dbReference type="InterPro" id="IPR040663">
    <property type="entry name" value="DNA_pol_D_N"/>
</dbReference>
<dbReference type="InterPro" id="IPR024826">
    <property type="entry name" value="DNA_pol_delta/II_ssu"/>
</dbReference>
<dbReference type="InterPro" id="IPR041863">
    <property type="entry name" value="PolD2_C"/>
</dbReference>
<dbReference type="PANTHER" id="PTHR10416">
    <property type="entry name" value="DNA POLYMERASE DELTA SUBUNIT 2"/>
    <property type="match status" value="1"/>
</dbReference>
<dbReference type="PANTHER" id="PTHR10416:SF0">
    <property type="entry name" value="DNA POLYMERASE DELTA SUBUNIT 2"/>
    <property type="match status" value="1"/>
</dbReference>
<dbReference type="Pfam" id="PF18018">
    <property type="entry name" value="DNA_pol_D_N"/>
    <property type="match status" value="1"/>
</dbReference>
<dbReference type="Pfam" id="PF04042">
    <property type="entry name" value="DNA_pol_E_B"/>
    <property type="match status" value="1"/>
</dbReference>
<protein>
    <recommendedName>
        <fullName>DNA polymerase delta small subunit</fullName>
        <ecNumber>2.7.7.7</ecNumber>
    </recommendedName>
</protein>
<comment type="function">
    <text>The function of the small subunit is not yet clear.</text>
</comment>
<comment type="catalytic activity">
    <reaction>
        <text>DNA(n) + a 2'-deoxyribonucleoside 5'-triphosphate = DNA(n+1) + diphosphate</text>
        <dbReference type="Rhea" id="RHEA:22508"/>
        <dbReference type="Rhea" id="RHEA-COMP:17339"/>
        <dbReference type="Rhea" id="RHEA-COMP:17340"/>
        <dbReference type="ChEBI" id="CHEBI:33019"/>
        <dbReference type="ChEBI" id="CHEBI:61560"/>
        <dbReference type="ChEBI" id="CHEBI:173112"/>
        <dbReference type="EC" id="2.7.7.7"/>
    </reaction>
</comment>
<comment type="subunit">
    <text evidence="1">Heterodimer with subunits of 125 kDa and 50 kDa.</text>
</comment>
<comment type="subcellular location">
    <subcellularLocation>
        <location evidence="1">Nucleus</location>
    </subcellularLocation>
</comment>
<comment type="alternative products">
    <event type="alternative splicing"/>
    <isoform>
        <id>O48520-1</id>
        <name>1</name>
        <sequence type="displayed"/>
    </isoform>
    <text>A number of isoforms are produced. According to EST sequences.</text>
</comment>
<comment type="similarity">
    <text evidence="2">Belongs to the DNA polymerase delta/II small subunit family.</text>
</comment>
<comment type="sequence caution" evidence="2">
    <conflict type="erroneous gene model prediction">
        <sequence resource="EMBL-CDS" id="AAB88640"/>
    </conflict>
</comment>
<keyword id="KW-0025">Alternative splicing</keyword>
<keyword id="KW-0235">DNA replication</keyword>
<keyword id="KW-0239">DNA-directed DNA polymerase</keyword>
<keyword id="KW-0548">Nucleotidyltransferase</keyword>
<keyword id="KW-0539">Nucleus</keyword>
<keyword id="KW-1185">Reference proteome</keyword>
<keyword id="KW-0808">Transferase</keyword>
<accession>O48520</accession>
<accession>Q8L781</accession>
<gene>
    <name type="primary">POLD2</name>
    <name type="ordered locus">At2g42120</name>
    <name type="ORF">T24P15.3</name>
</gene>
<organism>
    <name type="scientific">Arabidopsis thaliana</name>
    <name type="common">Mouse-ear cress</name>
    <dbReference type="NCBI Taxonomy" id="3702"/>
    <lineage>
        <taxon>Eukaryota</taxon>
        <taxon>Viridiplantae</taxon>
        <taxon>Streptophyta</taxon>
        <taxon>Embryophyta</taxon>
        <taxon>Tracheophyta</taxon>
        <taxon>Spermatophyta</taxon>
        <taxon>Magnoliopsida</taxon>
        <taxon>eudicotyledons</taxon>
        <taxon>Gunneridae</taxon>
        <taxon>Pentapetalae</taxon>
        <taxon>rosids</taxon>
        <taxon>malvids</taxon>
        <taxon>Brassicales</taxon>
        <taxon>Brassicaceae</taxon>
        <taxon>Camelineae</taxon>
        <taxon>Arabidopsis</taxon>
    </lineage>
</organism>
<reference key="1">
    <citation type="journal article" date="1999" name="Nature">
        <title>Sequence and analysis of chromosome 2 of the plant Arabidopsis thaliana.</title>
        <authorList>
            <person name="Lin X."/>
            <person name="Kaul S."/>
            <person name="Rounsley S.D."/>
            <person name="Shea T.P."/>
            <person name="Benito M.-I."/>
            <person name="Town C.D."/>
            <person name="Fujii C.Y."/>
            <person name="Mason T.M."/>
            <person name="Bowman C.L."/>
            <person name="Barnstead M.E."/>
            <person name="Feldblyum T.V."/>
            <person name="Buell C.R."/>
            <person name="Ketchum K.A."/>
            <person name="Lee J.J."/>
            <person name="Ronning C.M."/>
            <person name="Koo H.L."/>
            <person name="Moffat K.S."/>
            <person name="Cronin L.A."/>
            <person name="Shen M."/>
            <person name="Pai G."/>
            <person name="Van Aken S."/>
            <person name="Umayam L."/>
            <person name="Tallon L.J."/>
            <person name="Gill J.E."/>
            <person name="Adams M.D."/>
            <person name="Carrera A.J."/>
            <person name="Creasy T.H."/>
            <person name="Goodman H.M."/>
            <person name="Somerville C.R."/>
            <person name="Copenhaver G.P."/>
            <person name="Preuss D."/>
            <person name="Nierman W.C."/>
            <person name="White O."/>
            <person name="Eisen J.A."/>
            <person name="Salzberg S.L."/>
            <person name="Fraser C.M."/>
            <person name="Venter J.C."/>
        </authorList>
    </citation>
    <scope>NUCLEOTIDE SEQUENCE [LARGE SCALE GENOMIC DNA]</scope>
    <source>
        <strain>cv. Columbia</strain>
    </source>
</reference>
<reference key="2">
    <citation type="journal article" date="2017" name="Plant J.">
        <title>Araport11: a complete reannotation of the Arabidopsis thaliana reference genome.</title>
        <authorList>
            <person name="Cheng C.Y."/>
            <person name="Krishnakumar V."/>
            <person name="Chan A.P."/>
            <person name="Thibaud-Nissen F."/>
            <person name="Schobel S."/>
            <person name="Town C.D."/>
        </authorList>
    </citation>
    <scope>GENOME REANNOTATION</scope>
    <source>
        <strain>cv. Columbia</strain>
    </source>
</reference>
<reference key="3">
    <citation type="journal article" date="2003" name="Science">
        <title>Empirical analysis of transcriptional activity in the Arabidopsis genome.</title>
        <authorList>
            <person name="Yamada K."/>
            <person name="Lim J."/>
            <person name="Dale J.M."/>
            <person name="Chen H."/>
            <person name="Shinn P."/>
            <person name="Palm C.J."/>
            <person name="Southwick A.M."/>
            <person name="Wu H.C."/>
            <person name="Kim C.J."/>
            <person name="Nguyen M."/>
            <person name="Pham P.K."/>
            <person name="Cheuk R.F."/>
            <person name="Karlin-Newmann G."/>
            <person name="Liu S.X."/>
            <person name="Lam B."/>
            <person name="Sakano H."/>
            <person name="Wu T."/>
            <person name="Yu G."/>
            <person name="Miranda M."/>
            <person name="Quach H.L."/>
            <person name="Tripp M."/>
            <person name="Chang C.H."/>
            <person name="Lee J.M."/>
            <person name="Toriumi M.J."/>
            <person name="Chan M.M."/>
            <person name="Tang C.C."/>
            <person name="Onodera C.S."/>
            <person name="Deng J.M."/>
            <person name="Akiyama K."/>
            <person name="Ansari Y."/>
            <person name="Arakawa T."/>
            <person name="Banh J."/>
            <person name="Banno F."/>
            <person name="Bowser L."/>
            <person name="Brooks S.Y."/>
            <person name="Carninci P."/>
            <person name="Chao Q."/>
            <person name="Choy N."/>
            <person name="Enju A."/>
            <person name="Goldsmith A.D."/>
            <person name="Gurjal M."/>
            <person name="Hansen N.F."/>
            <person name="Hayashizaki Y."/>
            <person name="Johnson-Hopson C."/>
            <person name="Hsuan V.W."/>
            <person name="Iida K."/>
            <person name="Karnes M."/>
            <person name="Khan S."/>
            <person name="Koesema E."/>
            <person name="Ishida J."/>
            <person name="Jiang P.X."/>
            <person name="Jones T."/>
            <person name="Kawai J."/>
            <person name="Kamiya A."/>
            <person name="Meyers C."/>
            <person name="Nakajima M."/>
            <person name="Narusaka M."/>
            <person name="Seki M."/>
            <person name="Sakurai T."/>
            <person name="Satou M."/>
            <person name="Tamse R."/>
            <person name="Vaysberg M."/>
            <person name="Wallender E.K."/>
            <person name="Wong C."/>
            <person name="Yamamura Y."/>
            <person name="Yuan S."/>
            <person name="Shinozaki K."/>
            <person name="Davis R.W."/>
            <person name="Theologis A."/>
            <person name="Ecker J.R."/>
        </authorList>
    </citation>
    <scope>NUCLEOTIDE SEQUENCE [LARGE SCALE MRNA]</scope>
    <source>
        <strain>cv. Columbia</strain>
    </source>
</reference>
<reference key="4">
    <citation type="submission" date="2005-03" db="EMBL/GenBank/DDBJ databases">
        <title>Large-scale analysis of RIKEN Arabidopsis full-length (RAFL) cDNAs.</title>
        <authorList>
            <person name="Totoki Y."/>
            <person name="Seki M."/>
            <person name="Ishida J."/>
            <person name="Nakajima M."/>
            <person name="Enju A."/>
            <person name="Kamiya A."/>
            <person name="Narusaka M."/>
            <person name="Shin-i T."/>
            <person name="Nakagawa M."/>
            <person name="Sakamoto N."/>
            <person name="Oishi K."/>
            <person name="Kohara Y."/>
            <person name="Kobayashi M."/>
            <person name="Toyoda A."/>
            <person name="Sakaki Y."/>
            <person name="Sakurai T."/>
            <person name="Iida K."/>
            <person name="Akiyama K."/>
            <person name="Satou M."/>
            <person name="Toyoda T."/>
            <person name="Konagaya A."/>
            <person name="Carninci P."/>
            <person name="Kawai J."/>
            <person name="Hayashizaki Y."/>
            <person name="Shinozaki K."/>
        </authorList>
    </citation>
    <scope>NUCLEOTIDE SEQUENCE [LARGE SCALE MRNA]</scope>
    <source>
        <strain>cv. Columbia</strain>
    </source>
</reference>
<evidence type="ECO:0000250" key="1"/>
<evidence type="ECO:0000305" key="2"/>